<feature type="chain" id="PRO_0000173442" description="Quinidine resistance protein 2">
    <location>
        <begin position="1"/>
        <end position="542"/>
    </location>
</feature>
<feature type="topological domain" description="Cytoplasmic" evidence="1">
    <location>
        <begin position="1"/>
        <end position="67"/>
    </location>
</feature>
<feature type="transmembrane region" description="Helical" evidence="1">
    <location>
        <begin position="68"/>
        <end position="88"/>
    </location>
</feature>
<feature type="topological domain" description="Extracellular" evidence="1">
    <location>
        <begin position="89"/>
        <end position="100"/>
    </location>
</feature>
<feature type="transmembrane region" description="Helical" evidence="1">
    <location>
        <begin position="101"/>
        <end position="121"/>
    </location>
</feature>
<feature type="topological domain" description="Cytoplasmic" evidence="1">
    <location>
        <begin position="122"/>
        <end position="127"/>
    </location>
</feature>
<feature type="transmembrane region" description="Helical" evidence="1">
    <location>
        <begin position="128"/>
        <end position="148"/>
    </location>
</feature>
<feature type="topological domain" description="Extracellular" evidence="1">
    <location>
        <position position="149"/>
    </location>
</feature>
<feature type="transmembrane region" description="Helical" evidence="1">
    <location>
        <begin position="150"/>
        <end position="170"/>
    </location>
</feature>
<feature type="topological domain" description="Cytoplasmic" evidence="1">
    <location>
        <begin position="171"/>
        <end position="187"/>
    </location>
</feature>
<feature type="transmembrane region" description="Helical" evidence="1">
    <location>
        <begin position="188"/>
        <end position="208"/>
    </location>
</feature>
<feature type="topological domain" description="Extracellular" evidence="1">
    <location>
        <begin position="209"/>
        <end position="216"/>
    </location>
</feature>
<feature type="transmembrane region" description="Helical" evidence="1">
    <location>
        <begin position="217"/>
        <end position="237"/>
    </location>
</feature>
<feature type="topological domain" description="Cytoplasmic" evidence="1">
    <location>
        <begin position="238"/>
        <end position="300"/>
    </location>
</feature>
<feature type="transmembrane region" description="Helical" evidence="1">
    <location>
        <begin position="301"/>
        <end position="321"/>
    </location>
</feature>
<feature type="topological domain" description="Extracellular" evidence="1">
    <location>
        <begin position="322"/>
        <end position="333"/>
    </location>
</feature>
<feature type="transmembrane region" description="Helical" evidence="1">
    <location>
        <begin position="334"/>
        <end position="354"/>
    </location>
</feature>
<feature type="topological domain" description="Cytoplasmic" evidence="1">
    <location>
        <begin position="355"/>
        <end position="413"/>
    </location>
</feature>
<feature type="transmembrane region" description="Helical" evidence="1">
    <location>
        <begin position="414"/>
        <end position="434"/>
    </location>
</feature>
<feature type="topological domain" description="Extracellular" evidence="1">
    <location>
        <begin position="435"/>
        <end position="437"/>
    </location>
</feature>
<feature type="transmembrane region" description="Helical" evidence="1">
    <location>
        <begin position="438"/>
        <end position="458"/>
    </location>
</feature>
<feature type="topological domain" description="Cytoplasmic" evidence="1">
    <location>
        <begin position="459"/>
        <end position="472"/>
    </location>
</feature>
<feature type="transmembrane region" description="Helical" evidence="1">
    <location>
        <begin position="473"/>
        <end position="493"/>
    </location>
</feature>
<feature type="topological domain" description="Extracellular" evidence="1">
    <location>
        <begin position="494"/>
        <end position="503"/>
    </location>
</feature>
<feature type="transmembrane region" description="Helical" evidence="1">
    <location>
        <begin position="504"/>
        <end position="524"/>
    </location>
</feature>
<feature type="topological domain" description="Cytoplasmic" evidence="1">
    <location>
        <begin position="525"/>
        <end position="542"/>
    </location>
</feature>
<feature type="modified residue" description="Phosphoserine" evidence="5">
    <location>
        <position position="21"/>
    </location>
</feature>
<feature type="modified residue" description="Phosphothreonine" evidence="5">
    <location>
        <position position="38"/>
    </location>
</feature>
<feature type="modified residue" description="Phosphoserine" evidence="5">
    <location>
        <position position="40"/>
    </location>
</feature>
<accession>P40474</accession>
<accession>D6VVG6</accession>
<sequence length="542" mass="59618">MAGATSSIIRENDFEDELAESMQSYNRETADKLALTRTESVKPEPEITAPPHSRFSRSFKTVLIAQCAFTGFFSTIAGAIYYPVLSVIERKFDIDEELVNVTVVVYFVFQGLAPTFMGGFADSLGRRPVVLVAIVIYFGACIGLACAQTYAQIIVLRCLQAAGISPVIAINSGIMGDVTTRAERGGYVGYVAGFQVLGSAFGALIGAGLSSRWGWRAIFWFLAIGSGICFLASFLILPETKRNISGNGSVTPKSYLNRAPILVLPTVRKSLHLDNPDYETLELPTQLNLLAPFKILKAYEICILMLVAGLQFAMYTTHLTALSTALSKQYHLTVAKVGLCYLPSGICTLCSIVIAGRYLNWNYRRRLKYYQNWLGKKRSKLLEEHDNDLNLVQRIIENDPKYTFNIFKARLQPAFVTLLLSSSGFCAYGWCITVKAPLAAVLCMSGFASLFSNCILTFSTTLIVDLFPTKTSTATGCLNLFRCILSAVFIAALSKMVEKMKFGGVFTFLGALTSSSSILLFILLRKGKELAFKRKKQELGVN</sequence>
<gene>
    <name type="primary">QDR2</name>
    <name type="ordered locus">YIL121W</name>
</gene>
<reference key="1">
    <citation type="journal article" date="1997" name="Nature">
        <title>The nucleotide sequence of Saccharomyces cerevisiae chromosome IX.</title>
        <authorList>
            <person name="Churcher C.M."/>
            <person name="Bowman S."/>
            <person name="Badcock K."/>
            <person name="Bankier A.T."/>
            <person name="Brown D."/>
            <person name="Chillingworth T."/>
            <person name="Connor R."/>
            <person name="Devlin K."/>
            <person name="Gentles S."/>
            <person name="Hamlin N."/>
            <person name="Harris D.E."/>
            <person name="Horsnell T."/>
            <person name="Hunt S."/>
            <person name="Jagels K."/>
            <person name="Jones M."/>
            <person name="Lye G."/>
            <person name="Moule S."/>
            <person name="Odell C."/>
            <person name="Pearson D."/>
            <person name="Rajandream M.A."/>
            <person name="Rice P."/>
            <person name="Rowley N."/>
            <person name="Skelton J."/>
            <person name="Smith V."/>
            <person name="Walsh S.V."/>
            <person name="Whitehead S."/>
            <person name="Barrell B.G."/>
        </authorList>
    </citation>
    <scope>NUCLEOTIDE SEQUENCE [LARGE SCALE GENOMIC DNA]</scope>
    <source>
        <strain>ATCC 204508 / S288c</strain>
    </source>
</reference>
<reference key="2">
    <citation type="journal article" date="2014" name="G3 (Bethesda)">
        <title>The reference genome sequence of Saccharomyces cerevisiae: Then and now.</title>
        <authorList>
            <person name="Engel S.R."/>
            <person name="Dietrich F.S."/>
            <person name="Fisk D.G."/>
            <person name="Binkley G."/>
            <person name="Balakrishnan R."/>
            <person name="Costanzo M.C."/>
            <person name="Dwight S.S."/>
            <person name="Hitz B.C."/>
            <person name="Karra K."/>
            <person name="Nash R.S."/>
            <person name="Weng S."/>
            <person name="Wong E.D."/>
            <person name="Lloyd P."/>
            <person name="Skrzypek M.S."/>
            <person name="Miyasato S.R."/>
            <person name="Simison M."/>
            <person name="Cherry J.M."/>
        </authorList>
    </citation>
    <scope>GENOME REANNOTATION</scope>
    <source>
        <strain>ATCC 204508 / S288c</strain>
    </source>
</reference>
<reference key="3">
    <citation type="journal article" date="2007" name="Genome Res.">
        <title>Approaching a complete repository of sequence-verified protein-encoding clones for Saccharomyces cerevisiae.</title>
        <authorList>
            <person name="Hu Y."/>
            <person name="Rolfs A."/>
            <person name="Bhullar B."/>
            <person name="Murthy T.V.S."/>
            <person name="Zhu C."/>
            <person name="Berger M.F."/>
            <person name="Camargo A.A."/>
            <person name="Kelley F."/>
            <person name="McCarron S."/>
            <person name="Jepson D."/>
            <person name="Richardson A."/>
            <person name="Raphael J."/>
            <person name="Moreira D."/>
            <person name="Taycher E."/>
            <person name="Zuo D."/>
            <person name="Mohr S."/>
            <person name="Kane M.F."/>
            <person name="Williamson J."/>
            <person name="Simpson A.J.G."/>
            <person name="Bulyk M.L."/>
            <person name="Harlow E."/>
            <person name="Marsischky G."/>
            <person name="Kolodner R.D."/>
            <person name="LaBaer J."/>
        </authorList>
    </citation>
    <scope>NUCLEOTIDE SEQUENCE [GENOMIC DNA]</scope>
    <source>
        <strain>ATCC 204508 / S288c</strain>
    </source>
</reference>
<reference key="4">
    <citation type="journal article" date="2004" name="Antimicrob. Agents Chemother.">
        <title>Saccharomyces cerevisiae multidrug transporter Qdr2p (Yil121wp): localization and function as a quinidine resistance determinant.</title>
        <authorList>
            <person name="Vargas R.C."/>
            <person name="Tenreiro S."/>
            <person name="Teixeira M.C."/>
            <person name="Fernandes A.R."/>
            <person name="Sa-Correia I."/>
        </authorList>
    </citation>
    <scope>FUNCTION</scope>
    <scope>SUBCELLULAR LOCATION</scope>
</reference>
<reference key="5">
    <citation type="journal article" date="2006" name="Proc. Natl. Acad. Sci. U.S.A.">
        <title>A global topology map of the Saccharomyces cerevisiae membrane proteome.</title>
        <authorList>
            <person name="Kim H."/>
            <person name="Melen K."/>
            <person name="Oesterberg M."/>
            <person name="von Heijne G."/>
        </authorList>
    </citation>
    <scope>TOPOLOGY [LARGE SCALE ANALYSIS]</scope>
    <source>
        <strain>ATCC 208353 / W303-1A</strain>
    </source>
</reference>
<reference key="6">
    <citation type="journal article" date="2007" name="Eukaryot. Cell">
        <title>Saccharomyces cerevisiae multidrug resistance transporter Qdr2 is implicated in potassium uptake, providing a physiological advantage to quinidine-stressed cells.</title>
        <authorList>
            <person name="Vargas R.C."/>
            <person name="Garcia-Salcedo R."/>
            <person name="Tenreiro S."/>
            <person name="Teixeira M.C."/>
            <person name="Fernandes A.R."/>
            <person name="Ramos J."/>
            <person name="Sa-Correia I."/>
        </authorList>
    </citation>
    <scope>FUNCTION</scope>
</reference>
<reference key="7">
    <citation type="journal article" date="2008" name="Mol. Cell. Proteomics">
        <title>A multidimensional chromatography technology for in-depth phosphoproteome analysis.</title>
        <authorList>
            <person name="Albuquerque C.P."/>
            <person name="Smolka M.B."/>
            <person name="Payne S.H."/>
            <person name="Bafna V."/>
            <person name="Eng J."/>
            <person name="Zhou H."/>
        </authorList>
    </citation>
    <scope>IDENTIFICATION BY MASS SPECTROMETRY [LARGE SCALE ANALYSIS]</scope>
</reference>
<reference key="8">
    <citation type="journal article" date="2009" name="Science">
        <title>Global analysis of Cdk1 substrate phosphorylation sites provides insights into evolution.</title>
        <authorList>
            <person name="Holt L.J."/>
            <person name="Tuch B.B."/>
            <person name="Villen J."/>
            <person name="Johnson A.D."/>
            <person name="Gygi S.P."/>
            <person name="Morgan D.O."/>
        </authorList>
    </citation>
    <scope>PHOSPHORYLATION [LARGE SCALE ANALYSIS] AT SER-21; THR-38 AND SER-40</scope>
    <scope>IDENTIFICATION BY MASS SPECTROMETRY [LARGE SCALE ANALYSIS]</scope>
</reference>
<proteinExistence type="evidence at protein level"/>
<dbReference type="EMBL" id="Z46833">
    <property type="protein sequence ID" value="CAA86871.1"/>
    <property type="molecule type" value="Genomic_DNA"/>
</dbReference>
<dbReference type="EMBL" id="AY692735">
    <property type="protein sequence ID" value="AAT92754.1"/>
    <property type="molecule type" value="Genomic_DNA"/>
</dbReference>
<dbReference type="EMBL" id="BK006942">
    <property type="protein sequence ID" value="DAA08432.1"/>
    <property type="molecule type" value="Genomic_DNA"/>
</dbReference>
<dbReference type="PIR" id="S49888">
    <property type="entry name" value="S49888"/>
</dbReference>
<dbReference type="RefSeq" id="NP_012145.1">
    <property type="nucleotide sequence ID" value="NM_001179469.1"/>
</dbReference>
<dbReference type="BioGRID" id="34870">
    <property type="interactions" value="67"/>
</dbReference>
<dbReference type="DIP" id="DIP-5661N"/>
<dbReference type="FunCoup" id="P40474">
    <property type="interactions" value="94"/>
</dbReference>
<dbReference type="IntAct" id="P40474">
    <property type="interactions" value="25"/>
</dbReference>
<dbReference type="MINT" id="P40474"/>
<dbReference type="STRING" id="4932.YIL121W"/>
<dbReference type="TCDB" id="2.A.1.2.31">
    <property type="family name" value="the major facilitator superfamily (mfs)"/>
</dbReference>
<dbReference type="iPTMnet" id="P40474"/>
<dbReference type="PaxDb" id="4932-YIL121W"/>
<dbReference type="PeptideAtlas" id="P40474"/>
<dbReference type="EnsemblFungi" id="YIL121W_mRNA">
    <property type="protein sequence ID" value="YIL121W"/>
    <property type="gene ID" value="YIL121W"/>
</dbReference>
<dbReference type="GeneID" id="854685"/>
<dbReference type="KEGG" id="sce:YIL121W"/>
<dbReference type="AGR" id="SGD:S000001383"/>
<dbReference type="SGD" id="S000001383">
    <property type="gene designation" value="QDR2"/>
</dbReference>
<dbReference type="VEuPathDB" id="FungiDB:YIL121W"/>
<dbReference type="eggNOG" id="KOG0255">
    <property type="taxonomic scope" value="Eukaryota"/>
</dbReference>
<dbReference type="GeneTree" id="ENSGT00940000176391"/>
<dbReference type="HOGENOM" id="CLU_008455_8_4_1"/>
<dbReference type="InParanoid" id="P40474"/>
<dbReference type="OMA" id="NWNYRRR"/>
<dbReference type="OrthoDB" id="440553at2759"/>
<dbReference type="BioCyc" id="YEAST:G3O-31374-MONOMER"/>
<dbReference type="BioGRID-ORCS" id="854685">
    <property type="hits" value="0 hits in 10 CRISPR screens"/>
</dbReference>
<dbReference type="PRO" id="PR:P40474"/>
<dbReference type="Proteomes" id="UP000002311">
    <property type="component" value="Chromosome IX"/>
</dbReference>
<dbReference type="RNAct" id="P40474">
    <property type="molecule type" value="protein"/>
</dbReference>
<dbReference type="GO" id="GO:0071944">
    <property type="term" value="C:cell periphery"/>
    <property type="evidence" value="ECO:0007005"/>
    <property type="project" value="SGD"/>
</dbReference>
<dbReference type="GO" id="GO:0005886">
    <property type="term" value="C:plasma membrane"/>
    <property type="evidence" value="ECO:0000314"/>
    <property type="project" value="SGD"/>
</dbReference>
<dbReference type="GO" id="GO:0008324">
    <property type="term" value="F:monoatomic cation transmembrane transporter activity"/>
    <property type="evidence" value="ECO:0000315"/>
    <property type="project" value="SGD"/>
</dbReference>
<dbReference type="GO" id="GO:0015565">
    <property type="term" value="F:threonine efflux transmembrane transporter activity"/>
    <property type="evidence" value="ECO:0000315"/>
    <property type="project" value="SGD"/>
</dbReference>
<dbReference type="GO" id="GO:0022857">
    <property type="term" value="F:transmembrane transporter activity"/>
    <property type="evidence" value="ECO:0000318"/>
    <property type="project" value="GO_Central"/>
</dbReference>
<dbReference type="GO" id="GO:0042910">
    <property type="term" value="F:xenobiotic transmembrane transporter activity"/>
    <property type="evidence" value="ECO:0000315"/>
    <property type="project" value="SGD"/>
</dbReference>
<dbReference type="GO" id="GO:0032973">
    <property type="term" value="P:amino acid export across plasma membrane"/>
    <property type="evidence" value="ECO:0000315"/>
    <property type="project" value="SGD"/>
</dbReference>
<dbReference type="GO" id="GO:0060003">
    <property type="term" value="P:copper ion export"/>
    <property type="evidence" value="ECO:0000315"/>
    <property type="project" value="SGD"/>
</dbReference>
<dbReference type="GO" id="GO:1990573">
    <property type="term" value="P:potassium ion import across plasma membrane"/>
    <property type="evidence" value="ECO:0000315"/>
    <property type="project" value="SGD"/>
</dbReference>
<dbReference type="GO" id="GO:0055085">
    <property type="term" value="P:transmembrane transport"/>
    <property type="evidence" value="ECO:0000315"/>
    <property type="project" value="SGD"/>
</dbReference>
<dbReference type="CDD" id="cd17323">
    <property type="entry name" value="MFS_Tpo1_MDR_like"/>
    <property type="match status" value="1"/>
</dbReference>
<dbReference type="Gene3D" id="1.20.1250.20">
    <property type="entry name" value="MFS general substrate transporter like domains"/>
    <property type="match status" value="1"/>
</dbReference>
<dbReference type="InterPro" id="IPR011701">
    <property type="entry name" value="MFS"/>
</dbReference>
<dbReference type="InterPro" id="IPR020846">
    <property type="entry name" value="MFS_dom"/>
</dbReference>
<dbReference type="InterPro" id="IPR036259">
    <property type="entry name" value="MFS_trans_sf"/>
</dbReference>
<dbReference type="InterPro" id="IPR005829">
    <property type="entry name" value="Sugar_transporter_CS"/>
</dbReference>
<dbReference type="PANTHER" id="PTHR23502">
    <property type="entry name" value="MAJOR FACILITATOR SUPERFAMILY"/>
    <property type="match status" value="1"/>
</dbReference>
<dbReference type="PANTHER" id="PTHR23502:SF51">
    <property type="entry name" value="QUINIDINE RESISTANCE PROTEIN 1-RELATED"/>
    <property type="match status" value="1"/>
</dbReference>
<dbReference type="Pfam" id="PF07690">
    <property type="entry name" value="MFS_1"/>
    <property type="match status" value="1"/>
</dbReference>
<dbReference type="SUPFAM" id="SSF103473">
    <property type="entry name" value="MFS general substrate transporter"/>
    <property type="match status" value="1"/>
</dbReference>
<dbReference type="PROSITE" id="PS50850">
    <property type="entry name" value="MFS"/>
    <property type="match status" value="1"/>
</dbReference>
<organism>
    <name type="scientific">Saccharomyces cerevisiae (strain ATCC 204508 / S288c)</name>
    <name type="common">Baker's yeast</name>
    <dbReference type="NCBI Taxonomy" id="559292"/>
    <lineage>
        <taxon>Eukaryota</taxon>
        <taxon>Fungi</taxon>
        <taxon>Dikarya</taxon>
        <taxon>Ascomycota</taxon>
        <taxon>Saccharomycotina</taxon>
        <taxon>Saccharomycetes</taxon>
        <taxon>Saccharomycetales</taxon>
        <taxon>Saccharomycetaceae</taxon>
        <taxon>Saccharomyces</taxon>
    </lineage>
</organism>
<comment type="function">
    <text evidence="2 3">Multidrug resistance transporter involved in resistance and adaptation to quinidine and to the herbicide barban (4-chloro-2-butynyl [3-chlorophenyl] carbamate). Implicated in potassium uptake.</text>
</comment>
<comment type="subcellular location">
    <subcellularLocation>
        <location evidence="2">Cell membrane</location>
        <topology evidence="2">Multi-pass membrane protein</topology>
    </subcellularLocation>
</comment>
<comment type="similarity">
    <text evidence="4">Belongs to the major facilitator superfamily. CAR1 family.</text>
</comment>
<name>QDR2_YEAST</name>
<keyword id="KW-1003">Cell membrane</keyword>
<keyword id="KW-0406">Ion transport</keyword>
<keyword id="KW-0472">Membrane</keyword>
<keyword id="KW-0597">Phosphoprotein</keyword>
<keyword id="KW-0630">Potassium</keyword>
<keyword id="KW-0633">Potassium transport</keyword>
<keyword id="KW-1185">Reference proteome</keyword>
<keyword id="KW-0812">Transmembrane</keyword>
<keyword id="KW-1133">Transmembrane helix</keyword>
<keyword id="KW-0813">Transport</keyword>
<protein>
    <recommendedName>
        <fullName>Quinidine resistance protein 2</fullName>
    </recommendedName>
</protein>
<evidence type="ECO:0000255" key="1"/>
<evidence type="ECO:0000269" key="2">
    <source>
    </source>
</evidence>
<evidence type="ECO:0000269" key="3">
    <source>
    </source>
</evidence>
<evidence type="ECO:0000305" key="4"/>
<evidence type="ECO:0007744" key="5">
    <source>
    </source>
</evidence>